<protein>
    <recommendedName>
        <fullName>Stamen-specific protein FIL1</fullName>
    </recommendedName>
</protein>
<dbReference type="EMBL" id="X57296">
    <property type="protein sequence ID" value="CAA40553.1"/>
    <property type="molecule type" value="Genomic_DNA"/>
</dbReference>
<dbReference type="PIR" id="S40012">
    <property type="entry name" value="S40012"/>
</dbReference>
<dbReference type="SMR" id="Q38737"/>
<dbReference type="GO" id="GO:0005576">
    <property type="term" value="C:extracellular region"/>
    <property type="evidence" value="ECO:0007669"/>
    <property type="project" value="UniProtKB-SubCell"/>
</dbReference>
<dbReference type="CDD" id="cd04660">
    <property type="entry name" value="nsLTP_like"/>
    <property type="match status" value="1"/>
</dbReference>
<dbReference type="Gene3D" id="1.10.110.10">
    <property type="entry name" value="Plant lipid-transfer and hydrophobic proteins"/>
    <property type="match status" value="1"/>
</dbReference>
<dbReference type="InterPro" id="IPR036312">
    <property type="entry name" value="Bifun_inhib/LTP/seed_sf"/>
</dbReference>
<dbReference type="InterPro" id="IPR016140">
    <property type="entry name" value="Bifunc_inhib/LTP/seed_store"/>
</dbReference>
<dbReference type="InterPro" id="IPR044741">
    <property type="entry name" value="NsLTP-like"/>
</dbReference>
<dbReference type="PANTHER" id="PTHR35501">
    <property type="entry name" value="PROTEIN YY1"/>
    <property type="match status" value="1"/>
</dbReference>
<dbReference type="PANTHER" id="PTHR35501:SF3">
    <property type="entry name" value="PROTEIN YY1"/>
    <property type="match status" value="1"/>
</dbReference>
<dbReference type="Pfam" id="PF14368">
    <property type="entry name" value="LTP_2"/>
    <property type="match status" value="1"/>
</dbReference>
<dbReference type="SMART" id="SM00499">
    <property type="entry name" value="AAI"/>
    <property type="match status" value="1"/>
</dbReference>
<dbReference type="SUPFAM" id="SSF47699">
    <property type="entry name" value="Bifunctional inhibitor/lipid-transfer protein/seed storage 2S albumin"/>
    <property type="match status" value="1"/>
</dbReference>
<proteinExistence type="evidence at transcript level"/>
<comment type="subcellular location">
    <subcellularLocation>
        <location evidence="3">Secreted</location>
    </subcellularLocation>
</comment>
<comment type="tissue specificity">
    <text>Stamen-specific.</text>
</comment>
<comment type="similarity">
    <text evidence="3">Belongs to the A9/FIL1 family.</text>
</comment>
<gene>
    <name type="primary">FIL1</name>
</gene>
<name>FIL1_ANTMA</name>
<feature type="signal peptide" evidence="2">
    <location>
        <begin position="1"/>
        <end position="22"/>
    </location>
</feature>
<feature type="chain" id="PRO_0000000231" description="Stamen-specific protein FIL1">
    <location>
        <begin position="23"/>
        <end position="99"/>
    </location>
</feature>
<feature type="disulfide bond" evidence="1">
    <location>
        <begin position="31"/>
        <end position="68"/>
    </location>
</feature>
<feature type="disulfide bond" evidence="1">
    <location>
        <begin position="41"/>
        <end position="57"/>
    </location>
</feature>
<feature type="disulfide bond" evidence="1">
    <location>
        <begin position="58"/>
        <end position="83"/>
    </location>
</feature>
<feature type="disulfide bond" evidence="1">
    <location>
        <begin position="70"/>
        <end position="90"/>
    </location>
</feature>
<keyword id="KW-1015">Disulfide bond</keyword>
<keyword id="KW-0964">Secreted</keyword>
<keyword id="KW-0732">Signal</keyword>
<accession>Q38737</accession>
<reference key="1">
    <citation type="journal article" date="1991" name="Mol. Gen. Genet.">
        <title>Molecular characterization of two stamen-specific genes, tap1 and fil1, that are expressed in the wild type, but not in the deficiens mutant of Antirrhinum majus.</title>
        <authorList>
            <person name="Nacken W.K.F."/>
            <person name="Huijser P."/>
            <person name="Beltran J.-P."/>
            <person name="Saedler H."/>
            <person name="Sommer H."/>
        </authorList>
    </citation>
    <scope>NUCLEOTIDE SEQUENCE [GENOMIC DNA]</scope>
    <source>
        <strain>cv. Sippe 50</strain>
    </source>
</reference>
<sequence>MAAMKSIVPLVMLTVLVAQSQLITQSEAQTCSASLANLNACAPFVVLGAATTPSSDCCTALQSVDHECLCNTLRIASRVPAQCNLPPLSCGGKLSWTNC</sequence>
<organism>
    <name type="scientific">Antirrhinum majus</name>
    <name type="common">Garden snapdragon</name>
    <dbReference type="NCBI Taxonomy" id="4151"/>
    <lineage>
        <taxon>Eukaryota</taxon>
        <taxon>Viridiplantae</taxon>
        <taxon>Streptophyta</taxon>
        <taxon>Embryophyta</taxon>
        <taxon>Tracheophyta</taxon>
        <taxon>Spermatophyta</taxon>
        <taxon>Magnoliopsida</taxon>
        <taxon>eudicotyledons</taxon>
        <taxon>Gunneridae</taxon>
        <taxon>Pentapetalae</taxon>
        <taxon>asterids</taxon>
        <taxon>lamiids</taxon>
        <taxon>Lamiales</taxon>
        <taxon>Plantaginaceae</taxon>
        <taxon>Antirrhineae</taxon>
        <taxon>Antirrhinum</taxon>
    </lineage>
</organism>
<evidence type="ECO:0000250" key="1"/>
<evidence type="ECO:0000255" key="2"/>
<evidence type="ECO:0000305" key="3"/>